<keyword id="KW-0067">ATP-binding</keyword>
<keyword id="KW-0418">Kinase</keyword>
<keyword id="KW-0547">Nucleotide-binding</keyword>
<keyword id="KW-0539">Nucleus</keyword>
<keyword id="KW-1185">Reference proteome</keyword>
<keyword id="KW-0808">Transferase</keyword>
<protein>
    <recommendedName>
        <fullName>Inositol-pentakisphosphate 2-kinase</fullName>
        <ecNumber>2.7.1.158</ecNumber>
    </recommendedName>
    <alternativeName>
        <fullName>Inositol-1,3,4,5,6-pentakisphosphate 2-kinase</fullName>
    </alternativeName>
    <alternativeName>
        <fullName>Ins(1,3,4,5,6)P5 2-kinase</fullName>
        <shortName>InsP5 2-kinase</shortName>
    </alternativeName>
</protein>
<name>IPK1_KLULA</name>
<proteinExistence type="inferred from homology"/>
<organism>
    <name type="scientific">Kluyveromyces lactis (strain ATCC 8585 / CBS 2359 / DSM 70799 / NBRC 1267 / NRRL Y-1140 / WM37)</name>
    <name type="common">Yeast</name>
    <name type="synonym">Candida sphaerica</name>
    <dbReference type="NCBI Taxonomy" id="284590"/>
    <lineage>
        <taxon>Eukaryota</taxon>
        <taxon>Fungi</taxon>
        <taxon>Dikarya</taxon>
        <taxon>Ascomycota</taxon>
        <taxon>Saccharomycotina</taxon>
        <taxon>Saccharomycetes</taxon>
        <taxon>Saccharomycetales</taxon>
        <taxon>Saccharomycetaceae</taxon>
        <taxon>Kluyveromyces</taxon>
    </lineage>
</organism>
<sequence>MTLLFVGRGNANVCYLLSGEVYRISLRHQKLSRNNAYVQDNFQFIDSKIRSLPMLADVVVSMRLEEVFVDTKWINVLKDENILIDDSHMQCIVMPLLHAKDSTCEQLDHFNQIYRCSLNDAITWEFKPKWLYQSSDYCRNCTHNSLKGRDIEYCFLHDPELIIETLFAGRQVPEEFLDDILQYLQSSDSITQRLYAAQRFVKDDLSTLMTLRDVTCFLTWSRNTRSVKATIIDVDQKPANKLRHWQSTESALASFPGKKKAHFNHQ</sequence>
<evidence type="ECO:0000250" key="1"/>
<evidence type="ECO:0000305" key="2"/>
<gene>
    <name type="primary">IPK1</name>
    <name type="ordered locus">KLLA0E12705g</name>
</gene>
<dbReference type="EC" id="2.7.1.158"/>
<dbReference type="EMBL" id="CR382125">
    <property type="protein sequence ID" value="CAG99608.1"/>
    <property type="molecule type" value="Genomic_DNA"/>
</dbReference>
<dbReference type="RefSeq" id="XP_454521.1">
    <property type="nucleotide sequence ID" value="XM_454521.1"/>
</dbReference>
<dbReference type="FunCoup" id="Q6CNG8">
    <property type="interactions" value="44"/>
</dbReference>
<dbReference type="STRING" id="284590.Q6CNG8"/>
<dbReference type="PaxDb" id="284590-Q6CNG8"/>
<dbReference type="KEGG" id="kla:KLLA0_E12673g"/>
<dbReference type="eggNOG" id="ENOG502S05I">
    <property type="taxonomic scope" value="Eukaryota"/>
</dbReference>
<dbReference type="HOGENOM" id="CLU_046294_0_0_1"/>
<dbReference type="InParanoid" id="Q6CNG8"/>
<dbReference type="Proteomes" id="UP000000598">
    <property type="component" value="Chromosome E"/>
</dbReference>
<dbReference type="GO" id="GO:0005634">
    <property type="term" value="C:nucleus"/>
    <property type="evidence" value="ECO:0007669"/>
    <property type="project" value="UniProtKB-SubCell"/>
</dbReference>
<dbReference type="GO" id="GO:0005524">
    <property type="term" value="F:ATP binding"/>
    <property type="evidence" value="ECO:0007669"/>
    <property type="project" value="UniProtKB-KW"/>
</dbReference>
<dbReference type="GO" id="GO:0035299">
    <property type="term" value="F:inositol-1,3,4,5,6-pentakisphosphate 2-kinase activity"/>
    <property type="evidence" value="ECO:0007669"/>
    <property type="project" value="UniProtKB-EC"/>
</dbReference>
<dbReference type="GO" id="GO:0032958">
    <property type="term" value="P:inositol phosphate biosynthetic process"/>
    <property type="evidence" value="ECO:0007669"/>
    <property type="project" value="TreeGrafter"/>
</dbReference>
<dbReference type="InterPro" id="IPR009286">
    <property type="entry name" value="Ins_P5_2-kin"/>
</dbReference>
<dbReference type="PANTHER" id="PTHR14456">
    <property type="entry name" value="INOSITOL POLYPHOSPHATE KINASE 1"/>
    <property type="match status" value="1"/>
</dbReference>
<dbReference type="PANTHER" id="PTHR14456:SF2">
    <property type="entry name" value="INOSITOL-PENTAKISPHOSPHATE 2-KINASE"/>
    <property type="match status" value="1"/>
</dbReference>
<dbReference type="Pfam" id="PF06090">
    <property type="entry name" value="Ins_P5_2-kin"/>
    <property type="match status" value="1"/>
</dbReference>
<reference key="1">
    <citation type="journal article" date="2004" name="Nature">
        <title>Genome evolution in yeasts.</title>
        <authorList>
            <person name="Dujon B."/>
            <person name="Sherman D."/>
            <person name="Fischer G."/>
            <person name="Durrens P."/>
            <person name="Casaregola S."/>
            <person name="Lafontaine I."/>
            <person name="de Montigny J."/>
            <person name="Marck C."/>
            <person name="Neuveglise C."/>
            <person name="Talla E."/>
            <person name="Goffard N."/>
            <person name="Frangeul L."/>
            <person name="Aigle M."/>
            <person name="Anthouard V."/>
            <person name="Babour A."/>
            <person name="Barbe V."/>
            <person name="Barnay S."/>
            <person name="Blanchin S."/>
            <person name="Beckerich J.-M."/>
            <person name="Beyne E."/>
            <person name="Bleykasten C."/>
            <person name="Boisrame A."/>
            <person name="Boyer J."/>
            <person name="Cattolico L."/>
            <person name="Confanioleri F."/>
            <person name="de Daruvar A."/>
            <person name="Despons L."/>
            <person name="Fabre E."/>
            <person name="Fairhead C."/>
            <person name="Ferry-Dumazet H."/>
            <person name="Groppi A."/>
            <person name="Hantraye F."/>
            <person name="Hennequin C."/>
            <person name="Jauniaux N."/>
            <person name="Joyet P."/>
            <person name="Kachouri R."/>
            <person name="Kerrest A."/>
            <person name="Koszul R."/>
            <person name="Lemaire M."/>
            <person name="Lesur I."/>
            <person name="Ma L."/>
            <person name="Muller H."/>
            <person name="Nicaud J.-M."/>
            <person name="Nikolski M."/>
            <person name="Oztas S."/>
            <person name="Ozier-Kalogeropoulos O."/>
            <person name="Pellenz S."/>
            <person name="Potier S."/>
            <person name="Richard G.-F."/>
            <person name="Straub M.-L."/>
            <person name="Suleau A."/>
            <person name="Swennen D."/>
            <person name="Tekaia F."/>
            <person name="Wesolowski-Louvel M."/>
            <person name="Westhof E."/>
            <person name="Wirth B."/>
            <person name="Zeniou-Meyer M."/>
            <person name="Zivanovic Y."/>
            <person name="Bolotin-Fukuhara M."/>
            <person name="Thierry A."/>
            <person name="Bouchier C."/>
            <person name="Caudron B."/>
            <person name="Scarpelli C."/>
            <person name="Gaillardin C."/>
            <person name="Weissenbach J."/>
            <person name="Wincker P."/>
            <person name="Souciet J.-L."/>
        </authorList>
    </citation>
    <scope>NUCLEOTIDE SEQUENCE [LARGE SCALE GENOMIC DNA]</scope>
    <source>
        <strain>ATCC 8585 / CBS 2359 / DSM 70799 / NBRC 1267 / NRRL Y-1140 / WM37</strain>
    </source>
</reference>
<feature type="chain" id="PRO_0000110525" description="Inositol-pentakisphosphate 2-kinase">
    <location>
        <begin position="1"/>
        <end position="266"/>
    </location>
</feature>
<feature type="short sequence motif" description="EXKPK motif">
    <location>
        <begin position="125"/>
        <end position="129"/>
    </location>
</feature>
<comment type="function">
    <text evidence="1">Has kinase activity and phosphorylates inositol-1,3,4,5,6-pentakisphosphate (Ins(1,3,4,5,6)P5) to produce 1,2,3,4,5,6-hexakisphosphate (InsP6), also known as phytate.</text>
</comment>
<comment type="catalytic activity">
    <reaction>
        <text>1D-myo-inositol 1,3,4,5,6-pentakisphosphate + ATP = 1D-myo-inositol hexakisphosphate + ADP + H(+)</text>
        <dbReference type="Rhea" id="RHEA:20313"/>
        <dbReference type="ChEBI" id="CHEBI:15378"/>
        <dbReference type="ChEBI" id="CHEBI:30616"/>
        <dbReference type="ChEBI" id="CHEBI:57733"/>
        <dbReference type="ChEBI" id="CHEBI:58130"/>
        <dbReference type="ChEBI" id="CHEBI:456216"/>
        <dbReference type="EC" id="2.7.1.158"/>
    </reaction>
</comment>
<comment type="subcellular location">
    <subcellularLocation>
        <location evidence="1">Nucleus</location>
    </subcellularLocation>
</comment>
<comment type="domain">
    <text>The EXKPK motif is conserved in inositol-pentakisphosphate 2-kinases of both family 1 and 2.</text>
</comment>
<comment type="similarity">
    <text evidence="2">Belongs to the IPK1 type 1 family.</text>
</comment>
<accession>Q6CNG8</accession>